<proteinExistence type="inferred from homology"/>
<organism>
    <name type="scientific">Mesorhizobium japonicum (strain LMG 29417 / CECT 9101 / MAFF 303099)</name>
    <name type="common">Mesorhizobium loti (strain MAFF 303099)</name>
    <dbReference type="NCBI Taxonomy" id="266835"/>
    <lineage>
        <taxon>Bacteria</taxon>
        <taxon>Pseudomonadati</taxon>
        <taxon>Pseudomonadota</taxon>
        <taxon>Alphaproteobacteria</taxon>
        <taxon>Hyphomicrobiales</taxon>
        <taxon>Phyllobacteriaceae</taxon>
        <taxon>Mesorhizobium</taxon>
    </lineage>
</organism>
<reference key="1">
    <citation type="journal article" date="2000" name="DNA Res.">
        <title>Complete genome structure of the nitrogen-fixing symbiotic bacterium Mesorhizobium loti.</title>
        <authorList>
            <person name="Kaneko T."/>
            <person name="Nakamura Y."/>
            <person name="Sato S."/>
            <person name="Asamizu E."/>
            <person name="Kato T."/>
            <person name="Sasamoto S."/>
            <person name="Watanabe A."/>
            <person name="Idesawa K."/>
            <person name="Ishikawa A."/>
            <person name="Kawashima K."/>
            <person name="Kimura T."/>
            <person name="Kishida Y."/>
            <person name="Kiyokawa C."/>
            <person name="Kohara M."/>
            <person name="Matsumoto M."/>
            <person name="Matsuno A."/>
            <person name="Mochizuki Y."/>
            <person name="Nakayama S."/>
            <person name="Nakazaki N."/>
            <person name="Shimpo S."/>
            <person name="Sugimoto M."/>
            <person name="Takeuchi C."/>
            <person name="Yamada M."/>
            <person name="Tabata S."/>
        </authorList>
    </citation>
    <scope>NUCLEOTIDE SEQUENCE [LARGE SCALE GENOMIC DNA]</scope>
    <source>
        <strain>LMG 29417 / CECT 9101 / MAFF 303099</strain>
    </source>
</reference>
<evidence type="ECO:0000255" key="1">
    <source>
        <dbReference type="HAMAP-Rule" id="MF_01366"/>
    </source>
</evidence>
<evidence type="ECO:0000305" key="2"/>
<gene>
    <name evidence="1" type="primary">rplM</name>
    <name type="ordered locus">mll8458</name>
</gene>
<sequence>MTTFSQKPADVVKKWILIDAEGLVVGRLATVIANHLRGKHKPTFTPHVDDGDNVIVINADKVVFTGKKFTDKVYYWHTGHPGGIKERTARQLLEGRFPERVVEKAVERMVPRGPLGRRQMKNLRVYAGAEHPHVAQQPEVLDVAKLNSKNKKVA</sequence>
<accession>Q982W8</accession>
<name>RL13_RHILO</name>
<keyword id="KW-0687">Ribonucleoprotein</keyword>
<keyword id="KW-0689">Ribosomal protein</keyword>
<protein>
    <recommendedName>
        <fullName evidence="1">Large ribosomal subunit protein uL13</fullName>
    </recommendedName>
    <alternativeName>
        <fullName evidence="2">50S ribosomal protein L13</fullName>
    </alternativeName>
</protein>
<comment type="function">
    <text evidence="1">This protein is one of the early assembly proteins of the 50S ribosomal subunit, although it is not seen to bind rRNA by itself. It is important during the early stages of 50S assembly.</text>
</comment>
<comment type="subunit">
    <text evidence="1">Part of the 50S ribosomal subunit.</text>
</comment>
<comment type="similarity">
    <text evidence="1">Belongs to the universal ribosomal protein uL13 family.</text>
</comment>
<dbReference type="EMBL" id="BA000012">
    <property type="protein sequence ID" value="BAB54338.1"/>
    <property type="molecule type" value="Genomic_DNA"/>
</dbReference>
<dbReference type="RefSeq" id="WP_010915638.1">
    <property type="nucleotide sequence ID" value="NC_002678.2"/>
</dbReference>
<dbReference type="SMR" id="Q982W8"/>
<dbReference type="GeneID" id="90991815"/>
<dbReference type="KEGG" id="mlo:mll8458"/>
<dbReference type="eggNOG" id="COG0102">
    <property type="taxonomic scope" value="Bacteria"/>
</dbReference>
<dbReference type="HOGENOM" id="CLU_082184_2_0_5"/>
<dbReference type="Proteomes" id="UP000000552">
    <property type="component" value="Chromosome"/>
</dbReference>
<dbReference type="GO" id="GO:0022625">
    <property type="term" value="C:cytosolic large ribosomal subunit"/>
    <property type="evidence" value="ECO:0007669"/>
    <property type="project" value="TreeGrafter"/>
</dbReference>
<dbReference type="GO" id="GO:0003729">
    <property type="term" value="F:mRNA binding"/>
    <property type="evidence" value="ECO:0007669"/>
    <property type="project" value="TreeGrafter"/>
</dbReference>
<dbReference type="GO" id="GO:0003735">
    <property type="term" value="F:structural constituent of ribosome"/>
    <property type="evidence" value="ECO:0007669"/>
    <property type="project" value="InterPro"/>
</dbReference>
<dbReference type="GO" id="GO:0017148">
    <property type="term" value="P:negative regulation of translation"/>
    <property type="evidence" value="ECO:0007669"/>
    <property type="project" value="TreeGrafter"/>
</dbReference>
<dbReference type="GO" id="GO:0006412">
    <property type="term" value="P:translation"/>
    <property type="evidence" value="ECO:0007669"/>
    <property type="project" value="UniProtKB-UniRule"/>
</dbReference>
<dbReference type="CDD" id="cd00392">
    <property type="entry name" value="Ribosomal_L13"/>
    <property type="match status" value="1"/>
</dbReference>
<dbReference type="FunFam" id="3.90.1180.10:FF:000001">
    <property type="entry name" value="50S ribosomal protein L13"/>
    <property type="match status" value="1"/>
</dbReference>
<dbReference type="Gene3D" id="3.90.1180.10">
    <property type="entry name" value="Ribosomal protein L13"/>
    <property type="match status" value="1"/>
</dbReference>
<dbReference type="HAMAP" id="MF_01366">
    <property type="entry name" value="Ribosomal_uL13"/>
    <property type="match status" value="1"/>
</dbReference>
<dbReference type="InterPro" id="IPR005822">
    <property type="entry name" value="Ribosomal_uL13"/>
</dbReference>
<dbReference type="InterPro" id="IPR005823">
    <property type="entry name" value="Ribosomal_uL13_bac-type"/>
</dbReference>
<dbReference type="InterPro" id="IPR036899">
    <property type="entry name" value="Ribosomal_uL13_sf"/>
</dbReference>
<dbReference type="NCBIfam" id="TIGR01066">
    <property type="entry name" value="rplM_bact"/>
    <property type="match status" value="1"/>
</dbReference>
<dbReference type="PANTHER" id="PTHR11545:SF2">
    <property type="entry name" value="LARGE RIBOSOMAL SUBUNIT PROTEIN UL13M"/>
    <property type="match status" value="1"/>
</dbReference>
<dbReference type="PANTHER" id="PTHR11545">
    <property type="entry name" value="RIBOSOMAL PROTEIN L13"/>
    <property type="match status" value="1"/>
</dbReference>
<dbReference type="Pfam" id="PF00572">
    <property type="entry name" value="Ribosomal_L13"/>
    <property type="match status" value="1"/>
</dbReference>
<dbReference type="PIRSF" id="PIRSF002181">
    <property type="entry name" value="Ribosomal_L13"/>
    <property type="match status" value="1"/>
</dbReference>
<dbReference type="SUPFAM" id="SSF52161">
    <property type="entry name" value="Ribosomal protein L13"/>
    <property type="match status" value="1"/>
</dbReference>
<feature type="chain" id="PRO_0000261783" description="Large ribosomal subunit protein uL13">
    <location>
        <begin position="1"/>
        <end position="154"/>
    </location>
</feature>